<organism>
    <name type="scientific">Francisella philomiragia subsp. philomiragia (strain ATCC 25017 / CCUG 19701 / FSC 153 / O#319-036)</name>
    <dbReference type="NCBI Taxonomy" id="484022"/>
    <lineage>
        <taxon>Bacteria</taxon>
        <taxon>Pseudomonadati</taxon>
        <taxon>Pseudomonadota</taxon>
        <taxon>Gammaproteobacteria</taxon>
        <taxon>Thiotrichales</taxon>
        <taxon>Francisellaceae</taxon>
        <taxon>Francisella</taxon>
    </lineage>
</organism>
<evidence type="ECO:0000255" key="1">
    <source>
        <dbReference type="HAMAP-Rule" id="MF_01347"/>
    </source>
</evidence>
<sequence length="458" mass="49855">MSTGKIIQVIGAVIDVEFSRDNTPKVYDALNVKEANLVLEVQQQIGDGVVRTIAMGSSDGLRRGMVVENTNAPISVPVGHGTLGRIMNVLGEPIDEAGPIQYTETRSIHQAPPAYDELALSTEILETGIKVVDLICPFAKGGKVGLFGGAGVGKTVTMMELINNIAKEHSGYSVFAGVGERTREGNDFYYEMKDSNVLDKVALVYGQMNEPPGNRLRVALSGLTIAEGFRDEKRDVLMFIDNIYRYTLAGTEVSALLGRMPSAVGYQPTLAAEMGALQERITSTKTGSITSVQAVYVPADDLTDPSPATTFSHLDATIVLSRQIAELGIYPAVDPLDSTSRQLDPLVVGHDHYETARAVQKVLQRYKELKDIIAILGMDELSDEDKRTVDRARKIQRFLSQPFHVAEVFTGNPGKFVSLKDTVASFKAIVNGEYDHLPEQAFYMVGSIQEAIEKAKTL</sequence>
<gene>
    <name evidence="1" type="primary">atpD</name>
    <name type="ordered locus">Fphi_0962</name>
</gene>
<dbReference type="EC" id="7.1.2.2" evidence="1"/>
<dbReference type="EMBL" id="CP000937">
    <property type="protein sequence ID" value="ABZ87185.1"/>
    <property type="molecule type" value="Genomic_DNA"/>
</dbReference>
<dbReference type="SMR" id="B0TWS7"/>
<dbReference type="KEGG" id="fph:Fphi_0962"/>
<dbReference type="eggNOG" id="COG0055">
    <property type="taxonomic scope" value="Bacteria"/>
</dbReference>
<dbReference type="HOGENOM" id="CLU_022398_0_2_6"/>
<dbReference type="GO" id="GO:0005886">
    <property type="term" value="C:plasma membrane"/>
    <property type="evidence" value="ECO:0007669"/>
    <property type="project" value="UniProtKB-SubCell"/>
</dbReference>
<dbReference type="GO" id="GO:0045259">
    <property type="term" value="C:proton-transporting ATP synthase complex"/>
    <property type="evidence" value="ECO:0007669"/>
    <property type="project" value="UniProtKB-KW"/>
</dbReference>
<dbReference type="GO" id="GO:0005524">
    <property type="term" value="F:ATP binding"/>
    <property type="evidence" value="ECO:0007669"/>
    <property type="project" value="UniProtKB-UniRule"/>
</dbReference>
<dbReference type="GO" id="GO:0016887">
    <property type="term" value="F:ATP hydrolysis activity"/>
    <property type="evidence" value="ECO:0007669"/>
    <property type="project" value="InterPro"/>
</dbReference>
<dbReference type="GO" id="GO:0046933">
    <property type="term" value="F:proton-transporting ATP synthase activity, rotational mechanism"/>
    <property type="evidence" value="ECO:0007669"/>
    <property type="project" value="UniProtKB-UniRule"/>
</dbReference>
<dbReference type="CDD" id="cd18110">
    <property type="entry name" value="ATP-synt_F1_beta_C"/>
    <property type="match status" value="1"/>
</dbReference>
<dbReference type="CDD" id="cd18115">
    <property type="entry name" value="ATP-synt_F1_beta_N"/>
    <property type="match status" value="1"/>
</dbReference>
<dbReference type="CDD" id="cd01133">
    <property type="entry name" value="F1-ATPase_beta_CD"/>
    <property type="match status" value="1"/>
</dbReference>
<dbReference type="FunFam" id="1.10.1140.10:FF:000001">
    <property type="entry name" value="ATP synthase subunit beta"/>
    <property type="match status" value="1"/>
</dbReference>
<dbReference type="FunFam" id="2.40.10.170:FF:000003">
    <property type="entry name" value="ATP synthase subunit beta"/>
    <property type="match status" value="1"/>
</dbReference>
<dbReference type="FunFam" id="3.40.50.300:FF:000004">
    <property type="entry name" value="ATP synthase subunit beta"/>
    <property type="match status" value="1"/>
</dbReference>
<dbReference type="Gene3D" id="2.40.10.170">
    <property type="match status" value="1"/>
</dbReference>
<dbReference type="Gene3D" id="1.10.1140.10">
    <property type="entry name" value="Bovine Mitochondrial F1-atpase, Atp Synthase Beta Chain, Chain D, domain 3"/>
    <property type="match status" value="1"/>
</dbReference>
<dbReference type="Gene3D" id="3.40.50.300">
    <property type="entry name" value="P-loop containing nucleotide triphosphate hydrolases"/>
    <property type="match status" value="1"/>
</dbReference>
<dbReference type="HAMAP" id="MF_01347">
    <property type="entry name" value="ATP_synth_beta_bact"/>
    <property type="match status" value="1"/>
</dbReference>
<dbReference type="InterPro" id="IPR003593">
    <property type="entry name" value="AAA+_ATPase"/>
</dbReference>
<dbReference type="InterPro" id="IPR055190">
    <property type="entry name" value="ATP-synt_VA_C"/>
</dbReference>
<dbReference type="InterPro" id="IPR005722">
    <property type="entry name" value="ATP_synth_F1_bsu"/>
</dbReference>
<dbReference type="InterPro" id="IPR020003">
    <property type="entry name" value="ATPase_a/bsu_AS"/>
</dbReference>
<dbReference type="InterPro" id="IPR050053">
    <property type="entry name" value="ATPase_alpha/beta_chains"/>
</dbReference>
<dbReference type="InterPro" id="IPR004100">
    <property type="entry name" value="ATPase_F1/V1/A1_a/bsu_N"/>
</dbReference>
<dbReference type="InterPro" id="IPR036121">
    <property type="entry name" value="ATPase_F1/V1/A1_a/bsu_N_sf"/>
</dbReference>
<dbReference type="InterPro" id="IPR000194">
    <property type="entry name" value="ATPase_F1/V1/A1_a/bsu_nucl-bd"/>
</dbReference>
<dbReference type="InterPro" id="IPR024034">
    <property type="entry name" value="ATPase_F1/V1_b/a_C"/>
</dbReference>
<dbReference type="InterPro" id="IPR027417">
    <property type="entry name" value="P-loop_NTPase"/>
</dbReference>
<dbReference type="NCBIfam" id="TIGR01039">
    <property type="entry name" value="atpD"/>
    <property type="match status" value="1"/>
</dbReference>
<dbReference type="PANTHER" id="PTHR15184">
    <property type="entry name" value="ATP SYNTHASE"/>
    <property type="match status" value="1"/>
</dbReference>
<dbReference type="PANTHER" id="PTHR15184:SF71">
    <property type="entry name" value="ATP SYNTHASE SUBUNIT BETA, MITOCHONDRIAL"/>
    <property type="match status" value="1"/>
</dbReference>
<dbReference type="Pfam" id="PF00006">
    <property type="entry name" value="ATP-synt_ab"/>
    <property type="match status" value="1"/>
</dbReference>
<dbReference type="Pfam" id="PF02874">
    <property type="entry name" value="ATP-synt_ab_N"/>
    <property type="match status" value="1"/>
</dbReference>
<dbReference type="Pfam" id="PF22919">
    <property type="entry name" value="ATP-synt_VA_C"/>
    <property type="match status" value="1"/>
</dbReference>
<dbReference type="SMART" id="SM00382">
    <property type="entry name" value="AAA"/>
    <property type="match status" value="1"/>
</dbReference>
<dbReference type="SUPFAM" id="SSF47917">
    <property type="entry name" value="C-terminal domain of alpha and beta subunits of F1 ATP synthase"/>
    <property type="match status" value="1"/>
</dbReference>
<dbReference type="SUPFAM" id="SSF50615">
    <property type="entry name" value="N-terminal domain of alpha and beta subunits of F1 ATP synthase"/>
    <property type="match status" value="1"/>
</dbReference>
<dbReference type="SUPFAM" id="SSF52540">
    <property type="entry name" value="P-loop containing nucleoside triphosphate hydrolases"/>
    <property type="match status" value="1"/>
</dbReference>
<dbReference type="PROSITE" id="PS00152">
    <property type="entry name" value="ATPASE_ALPHA_BETA"/>
    <property type="match status" value="1"/>
</dbReference>
<proteinExistence type="inferred from homology"/>
<keyword id="KW-0066">ATP synthesis</keyword>
<keyword id="KW-0067">ATP-binding</keyword>
<keyword id="KW-0997">Cell inner membrane</keyword>
<keyword id="KW-1003">Cell membrane</keyword>
<keyword id="KW-0139">CF(1)</keyword>
<keyword id="KW-0375">Hydrogen ion transport</keyword>
<keyword id="KW-0406">Ion transport</keyword>
<keyword id="KW-0472">Membrane</keyword>
<keyword id="KW-0547">Nucleotide-binding</keyword>
<keyword id="KW-1278">Translocase</keyword>
<keyword id="KW-0813">Transport</keyword>
<reference key="1">
    <citation type="submission" date="2007-12" db="EMBL/GenBank/DDBJ databases">
        <title>Complete sequence of chromosome of Francisella philomiragia subsp. philomiragia ATCC 25017.</title>
        <authorList>
            <consortium name="US DOE Joint Genome Institute"/>
            <person name="Copeland A."/>
            <person name="Lucas S."/>
            <person name="Lapidus A."/>
            <person name="Barry K."/>
            <person name="Detter J.C."/>
            <person name="Glavina del Rio T."/>
            <person name="Hammon N."/>
            <person name="Israni S."/>
            <person name="Dalin E."/>
            <person name="Tice H."/>
            <person name="Pitluck S."/>
            <person name="Chain P."/>
            <person name="Malfatti S."/>
            <person name="Shin M."/>
            <person name="Vergez L."/>
            <person name="Schmutz J."/>
            <person name="Larimer F."/>
            <person name="Land M."/>
            <person name="Hauser L."/>
            <person name="Richardson P."/>
        </authorList>
    </citation>
    <scope>NUCLEOTIDE SEQUENCE [LARGE SCALE GENOMIC DNA]</scope>
    <source>
        <strain>ATCC 25017 / CCUG 19701 / FSC 153 / O#319-036</strain>
    </source>
</reference>
<accession>B0TWS7</accession>
<comment type="function">
    <text evidence="1">Produces ATP from ADP in the presence of a proton gradient across the membrane. The catalytic sites are hosted primarily by the beta subunits.</text>
</comment>
<comment type="catalytic activity">
    <reaction evidence="1">
        <text>ATP + H2O + 4 H(+)(in) = ADP + phosphate + 5 H(+)(out)</text>
        <dbReference type="Rhea" id="RHEA:57720"/>
        <dbReference type="ChEBI" id="CHEBI:15377"/>
        <dbReference type="ChEBI" id="CHEBI:15378"/>
        <dbReference type="ChEBI" id="CHEBI:30616"/>
        <dbReference type="ChEBI" id="CHEBI:43474"/>
        <dbReference type="ChEBI" id="CHEBI:456216"/>
        <dbReference type="EC" id="7.1.2.2"/>
    </reaction>
</comment>
<comment type="subunit">
    <text evidence="1">F-type ATPases have 2 components, CF(1) - the catalytic core - and CF(0) - the membrane proton channel. CF(1) has five subunits: alpha(3), beta(3), gamma(1), delta(1), epsilon(1). CF(0) has three main subunits: a(1), b(2) and c(9-12). The alpha and beta chains form an alternating ring which encloses part of the gamma chain. CF(1) is attached to CF(0) by a central stalk formed by the gamma and epsilon chains, while a peripheral stalk is formed by the delta and b chains.</text>
</comment>
<comment type="subcellular location">
    <subcellularLocation>
        <location evidence="1">Cell inner membrane</location>
        <topology evidence="1">Peripheral membrane protein</topology>
    </subcellularLocation>
</comment>
<comment type="similarity">
    <text evidence="1">Belongs to the ATPase alpha/beta chains family.</text>
</comment>
<name>ATPB_FRAP2</name>
<protein>
    <recommendedName>
        <fullName evidence="1">ATP synthase subunit beta</fullName>
        <ecNumber evidence="1">7.1.2.2</ecNumber>
    </recommendedName>
    <alternativeName>
        <fullName evidence="1">ATP synthase F1 sector subunit beta</fullName>
    </alternativeName>
    <alternativeName>
        <fullName evidence="1">F-ATPase subunit beta</fullName>
    </alternativeName>
</protein>
<feature type="chain" id="PRO_1000086912" description="ATP synthase subunit beta">
    <location>
        <begin position="1"/>
        <end position="458"/>
    </location>
</feature>
<feature type="binding site" evidence="1">
    <location>
        <begin position="148"/>
        <end position="155"/>
    </location>
    <ligand>
        <name>ATP</name>
        <dbReference type="ChEBI" id="CHEBI:30616"/>
    </ligand>
</feature>